<sequence length="432" mass="47345">MGNNVVVLGTQWGDEGKGKIVDLLTERAKYVVRYQGGHNAGHTLVINGEKTVLHLIPSGILRENVTSIIGNGVVLSPAALMKEMKELEDRGIPVRERLLLSEACPLILDYHVALDNAREKARGAKAIGTTGRGIGPAYEDKVARRGLRVGDLFDKETFAEKLKEVMEYHNFQLVNYYKAEAVDYQKVLDDTMAVADILTSMVVDVSDLLDQARQRGDFVMFEGAQGTLLDIDHGTYPYVTSSNTTAGGVATGSGLGPRYVDYVLGILKAYSTRVGAGPFPTELFDETGEFLCKQGNEFGATTGRRRRTGWLDTVAVRRAVQLNSLSGFCLTKLDVLDGLKEVKLCVAYRMPDGREVTTTPLAADDWKGVEPIYETMPGWSESTFGVKDRSGLPQAALNYIKRIEELTGVPIDIISTGPDRTETMILRDPFDA</sequence>
<accession>P0A7D4</accession>
<accession>P12283</accession>
<accession>Q2M6C8</accession>
<protein>
    <recommendedName>
        <fullName evidence="1">Adenylosuccinate synthetase</fullName>
        <shortName evidence="1">AMPSase</shortName>
        <shortName evidence="1">AdSS</shortName>
        <ecNumber evidence="1">6.3.4.4</ecNumber>
    </recommendedName>
    <alternativeName>
        <fullName evidence="1">IMP--aspartate ligase</fullName>
    </alternativeName>
</protein>
<comment type="function">
    <text evidence="1">Plays an important role in the de novo pathway of purine nucleotide biosynthesis. Catalyzes the first committed step in the biosynthesis of AMP from IMP.</text>
</comment>
<comment type="catalytic activity">
    <reaction evidence="1">
        <text>IMP + L-aspartate + GTP = N(6)-(1,2-dicarboxyethyl)-AMP + GDP + phosphate + 2 H(+)</text>
        <dbReference type="Rhea" id="RHEA:15753"/>
        <dbReference type="ChEBI" id="CHEBI:15378"/>
        <dbReference type="ChEBI" id="CHEBI:29991"/>
        <dbReference type="ChEBI" id="CHEBI:37565"/>
        <dbReference type="ChEBI" id="CHEBI:43474"/>
        <dbReference type="ChEBI" id="CHEBI:57567"/>
        <dbReference type="ChEBI" id="CHEBI:58053"/>
        <dbReference type="ChEBI" id="CHEBI:58189"/>
        <dbReference type="EC" id="6.3.4.4"/>
    </reaction>
</comment>
<comment type="cofactor">
    <cofactor>
        <name>Mg(2+)</name>
        <dbReference type="ChEBI" id="CHEBI:18420"/>
    </cofactor>
    <text>Binds 1 Mg(2+) ion per subunit.</text>
</comment>
<comment type="pathway">
    <text evidence="1">Purine metabolism; AMP biosynthesis via de novo pathway; AMP from IMP: step 1/2.</text>
</comment>
<comment type="subunit">
    <text evidence="1 2 6 7">Homodimer.</text>
</comment>
<comment type="subcellular location">
    <subcellularLocation>
        <location>Cytoplasm</location>
    </subcellularLocation>
</comment>
<comment type="similarity">
    <text evidence="1">Belongs to the adenylosuccinate synthetase family.</text>
</comment>
<keyword id="KW-0002">3D-structure</keyword>
<keyword id="KW-0963">Cytoplasm</keyword>
<keyword id="KW-0903">Direct protein sequencing</keyword>
<keyword id="KW-0342">GTP-binding</keyword>
<keyword id="KW-0436">Ligase</keyword>
<keyword id="KW-0460">Magnesium</keyword>
<keyword id="KW-0479">Metal-binding</keyword>
<keyword id="KW-0547">Nucleotide-binding</keyword>
<keyword id="KW-0658">Purine biosynthesis</keyword>
<keyword id="KW-1185">Reference proteome</keyword>
<reference key="1">
    <citation type="journal article" date="1988" name="J. Biol. Chem.">
        <title>Nucleotide sequence and analysis of the purA gene encoding adenylosuccinate synthetase of Escherichia coli K12.</title>
        <authorList>
            <person name="Wolfe S.A."/>
            <person name="Smith J.M."/>
        </authorList>
    </citation>
    <scope>NUCLEOTIDE SEQUENCE [GENOMIC DNA]</scope>
    <scope>PROTEIN SEQUENCE OF 2-11</scope>
    <source>
        <strain>K12</strain>
    </source>
</reference>
<reference key="2">
    <citation type="journal article" date="1995" name="Nucleic Acids Res.">
        <title>Analysis of the Escherichia coli genome VI: DNA sequence of the region from 92.8 through 100 minutes.</title>
        <authorList>
            <person name="Burland V.D."/>
            <person name="Plunkett G. III"/>
            <person name="Sofia H.J."/>
            <person name="Daniels D.L."/>
            <person name="Blattner F.R."/>
        </authorList>
    </citation>
    <scope>NUCLEOTIDE SEQUENCE [LARGE SCALE GENOMIC DNA]</scope>
    <source>
        <strain>K12 / MG1655 / ATCC 47076</strain>
    </source>
</reference>
<reference key="3">
    <citation type="journal article" date="1997" name="Science">
        <title>The complete genome sequence of Escherichia coli K-12.</title>
        <authorList>
            <person name="Blattner F.R."/>
            <person name="Plunkett G. III"/>
            <person name="Bloch C.A."/>
            <person name="Perna N.T."/>
            <person name="Burland V."/>
            <person name="Riley M."/>
            <person name="Collado-Vides J."/>
            <person name="Glasner J.D."/>
            <person name="Rode C.K."/>
            <person name="Mayhew G.F."/>
            <person name="Gregor J."/>
            <person name="Davis N.W."/>
            <person name="Kirkpatrick H.A."/>
            <person name="Goeden M.A."/>
            <person name="Rose D.J."/>
            <person name="Mau B."/>
            <person name="Shao Y."/>
        </authorList>
    </citation>
    <scope>NUCLEOTIDE SEQUENCE [LARGE SCALE GENOMIC DNA]</scope>
    <source>
        <strain>K12 / MG1655 / ATCC 47076</strain>
    </source>
</reference>
<reference key="4">
    <citation type="journal article" date="2006" name="Mol. Syst. Biol.">
        <title>Highly accurate genome sequences of Escherichia coli K-12 strains MG1655 and W3110.</title>
        <authorList>
            <person name="Hayashi K."/>
            <person name="Morooka N."/>
            <person name="Yamamoto Y."/>
            <person name="Fujita K."/>
            <person name="Isono K."/>
            <person name="Choi S."/>
            <person name="Ohtsubo E."/>
            <person name="Baba T."/>
            <person name="Wanner B.L."/>
            <person name="Mori H."/>
            <person name="Horiuchi T."/>
        </authorList>
    </citation>
    <scope>NUCLEOTIDE SEQUENCE [LARGE SCALE GENOMIC DNA]</scope>
    <source>
        <strain>K12 / W3110 / ATCC 27325 / DSM 5911</strain>
    </source>
</reference>
<reference key="5">
    <citation type="journal article" date="1991" name="J. Biol. Chem.">
        <title>Evidence for an arginine residue at the substrate binding site of Escherichia coli adenylosuccinate synthetase as studied by chemical modification and site-directed mutagenesis.</title>
        <authorList>
            <person name="Dong Q."/>
            <person name="Liu F."/>
            <person name="Myers A.M."/>
            <person name="Fromm H.J."/>
        </authorList>
    </citation>
    <scope>PROTEIN SEQUENCE OF 146-148</scope>
    <scope>MUTAGENESIS OF ARG-148</scope>
</reference>
<reference key="6">
    <citation type="journal article" date="1997" name="Electrophoresis">
        <title>Comparing the predicted and observed properties of proteins encoded in the genome of Escherichia coli K-12.</title>
        <authorList>
            <person name="Link A.J."/>
            <person name="Robison K."/>
            <person name="Church G.M."/>
        </authorList>
    </citation>
    <scope>PROTEIN SEQUENCE OF 2-10</scope>
    <source>
        <strain>K12 / EMG2</strain>
    </source>
</reference>
<reference key="7">
    <citation type="journal article" date="1990" name="J. Biol. Chem.">
        <title>Chemical modification of adenylosuccinate synthetase from Escherichia coli by pyridoxal 5'-phosphate. Identification of an active site lysyl residue.</title>
        <authorList>
            <person name="Dong Q."/>
            <person name="Fromm H.J."/>
        </authorList>
    </citation>
    <scope>ACTIVE SITE LYS-141</scope>
</reference>
<reference key="8">
    <citation type="journal article" date="1992" name="J. Biol. Chem.">
        <title>Site-directed mutagenesis of the phosphate-binding consensus sequence in Escherichia coli adenylosuccinate synthetase.</title>
        <authorList>
            <person name="Liu F."/>
            <person name="Dong Q."/>
            <person name="Fromm H.J."/>
        </authorList>
    </citation>
    <scope>MUTAGENESIS</scope>
</reference>
<reference key="9">
    <citation type="journal article" date="1995" name="J. Mol. Biol.">
        <title>Refined crystal structures of unligated adenylosuccinate synthetase from Escherichia coli.</title>
        <authorList>
            <person name="Silva M.M."/>
            <person name="Poland B.W."/>
            <person name="Hoffman C.R."/>
            <person name="Fromm H.J."/>
            <person name="Honzatko R.B."/>
        </authorList>
    </citation>
    <scope>X-RAY CRYSTALLOGRAPHY (2.0 ANGSTROMS)</scope>
    <scope>SEQUENCE REVISION TO 417</scope>
</reference>
<reference key="10">
    <citation type="journal article" date="1996" name="Biochemistry">
        <title>Refined crystal structure of adenylosuccinate synthetase from Escherichia coli complexed with hydantocidin 5'-phosphate, GDP, HPO4(2-), Mg2+, and hadacidin.</title>
        <authorList>
            <person name="Poland B.W."/>
            <person name="Lee S.F."/>
            <person name="Subramanian M.V."/>
            <person name="Siehl D.L."/>
            <person name="Anderson R.J."/>
            <person name="Fromm H.J."/>
            <person name="Honzatko R.B."/>
        </authorList>
    </citation>
    <scope>X-RAY CRYSTALLOGRAPHY (2.6 ANGSTROMS) IN COMPLEX WITH GDP; MAGNESIUM; SUBSTRATE ANALOG AND INHIBITOR</scope>
</reference>
<reference key="11">
    <citation type="journal article" date="1996" name="J. Biol. Chem.">
        <title>Refined crystal structures of guanine nucleotide complexes of adenylosuccinate synthetase from Escherichia coli.</title>
        <authorList>
            <person name="Poland B.W."/>
            <person name="Hou Z."/>
            <person name="Bruns C."/>
            <person name="Fromm H.J."/>
            <person name="Honzatko R.B."/>
        </authorList>
    </citation>
    <scope>X-RAY CRYSTALLOGRAPHY (2.30 ANGSTROMS) OF 2-431</scope>
</reference>
<reference key="12">
    <citation type="journal article" date="1996" name="J. Mol. Biol.">
        <title>Crystal structures of adenylosuccinate synthetase from Escherichia coli complexed with GDP, IMP hadacidin, NO3-, and Mg2+.</title>
        <authorList>
            <person name="Poland B.W."/>
            <person name="Fromm H.J."/>
            <person name="Honzatko R.B."/>
        </authorList>
    </citation>
    <scope>X-RAY CRYSTALLOGRAPHY (2.5 ANGSTROMS) IN COMPLEX WITH GDP; IMP; MAGNESIUM AND SUBSTRATE ANALOG</scope>
</reference>
<reference key="13">
    <citation type="journal article" date="1996" name="Proc. Natl. Acad. Sci. U.S.A.">
        <title>The mode of action and the structure of a herbicide in complex with its target: binding of activated hydantocidin to the feedback regulation site of adenylosuccinate synthetase.</title>
        <authorList>
            <person name="Fonne-Pfister R."/>
            <person name="Chemla P."/>
            <person name="Ward E."/>
            <person name="Girardet M."/>
            <person name="Kreuz K.E."/>
            <person name="Honzatko R.B."/>
            <person name="Fromm H.J."/>
            <person name="Schaer H.-P."/>
            <person name="Gruetter M.G."/>
            <person name="Cowan-Jacob S.W."/>
        </authorList>
    </citation>
    <scope>X-RAY CRYSTALLOGRAPHY (2.55 ANGSTROMS) OF 2-431</scope>
</reference>
<reference key="14">
    <citation type="journal article" date="1997" name="J. Biol. Chem.">
        <title>Entrapment of 6-thiophosphoryl-IMP in the active site of crystalline adenylosuccinate synthetase from Escherichia coli.</title>
        <authorList>
            <person name="Poland B.W."/>
            <person name="Bruns C."/>
            <person name="Fromm H.J."/>
            <person name="Honzatko R.B."/>
        </authorList>
    </citation>
    <scope>X-RAY CRYSTALLOGRAPHY (2.50 ANGSTROMS) OF 2-431</scope>
</reference>
<reference key="15">
    <citation type="journal article" date="1999" name="Angew. Chem. Int. Ed. Engl.">
        <title>An enzyme-bound bisubstrate hybrid inhibitor of adenylosuccinate synthetase.</title>
        <authorList>
            <person name="Hanessian S."/>
            <person name="Lu P.P."/>
            <person name="Sanceau J.Y."/>
            <person name="Chemla P."/>
            <person name="Gohda K."/>
            <person name="Fonne-Pfister R."/>
            <person name="Prade L."/>
            <person name="Cowan-Jacob S.W."/>
        </authorList>
    </citation>
    <scope>X-RAY CRYSTALLOGRAPHY (2.00 ANGSTROMS)</scope>
</reference>
<reference key="16">
    <citation type="journal article" date="1999" name="Biochemistry">
        <title>Mechanistic implications from crystalline complexes of wild-type and mutant adenylosuccinate synthetases from Escherichia coli.</title>
        <authorList>
            <person name="Choe J.Y."/>
            <person name="Poland B.W."/>
            <person name="Fromm H.J."/>
            <person name="Honzatko R.B."/>
        </authorList>
    </citation>
    <scope>X-RAY CRYSTALLOGRAPHY (2.5 ANGSTROMS) OF WILD-TYPE AND MUTANTS GLN-17; LEU-144 AND LEU-304 IN COMPLEX WITH GTP; IMP; MAGNESIUM AND SUBSTRATE ANALOG</scope>
</reference>
<reference key="17">
    <citation type="journal article" date="1999" name="J. Biol. Chem.">
        <title>Effectors of the stringent response target the active site of Escherichia coli adenylosuccinate synthetase.</title>
        <authorList>
            <person name="Hou Z."/>
            <person name="Cashel M."/>
            <person name="Fromm H.J."/>
            <person name="Honzatko R.B."/>
        </authorList>
    </citation>
    <scope>X-RAY CRYSTALLOGRAPHY (2.3 ANGSTROMS)</scope>
</reference>
<reference key="18">
    <citation type="journal article" date="2002" name="J. Biol. Chem.">
        <title>IMP alone organizes the active site of adenylosuccinate synthetase from Escherichia coli.</title>
        <authorList>
            <person name="Hou Z."/>
            <person name="Wang W."/>
            <person name="Fromm H.J."/>
            <person name="Honzatko R.B."/>
        </authorList>
    </citation>
    <scope>X-RAY CRYSTALLOGRAPHY (2.60 ANGSTROMS) OF 1-432</scope>
</reference>
<reference key="19">
    <citation type="journal article" date="2006" name="Biochemistry">
        <title>Cavitation as a mechanism of substrate discrimination by adenylosuccinate synthetases.</title>
        <authorList>
            <person name="Iancu C.V."/>
            <person name="Zhou Y."/>
            <person name="Borza T."/>
            <person name="Fromm H.J."/>
            <person name="Honzatko R.B."/>
        </authorList>
    </citation>
    <scope>X-RAY CRYSTALLOGRAPHY (2.00 ANGSTROMS) OF 2-431</scope>
</reference>
<evidence type="ECO:0000255" key="1">
    <source>
        <dbReference type="HAMAP-Rule" id="MF_00011"/>
    </source>
</evidence>
<evidence type="ECO:0000269" key="2">
    <source>
    </source>
</evidence>
<evidence type="ECO:0000269" key="3">
    <source>
    </source>
</evidence>
<evidence type="ECO:0000269" key="4">
    <source>
    </source>
</evidence>
<evidence type="ECO:0000269" key="5">
    <source>
    </source>
</evidence>
<evidence type="ECO:0000269" key="6">
    <source>
    </source>
</evidence>
<evidence type="ECO:0000269" key="7">
    <source>
    </source>
</evidence>
<evidence type="ECO:0000269" key="8">
    <source>
    </source>
</evidence>
<evidence type="ECO:0000305" key="9"/>
<evidence type="ECO:0007829" key="10">
    <source>
        <dbReference type="PDB" id="1ADE"/>
    </source>
</evidence>
<evidence type="ECO:0007829" key="11">
    <source>
        <dbReference type="PDB" id="1ADI"/>
    </source>
</evidence>
<evidence type="ECO:0007829" key="12">
    <source>
        <dbReference type="PDB" id="1GIM"/>
    </source>
</evidence>
<evidence type="ECO:0007829" key="13">
    <source>
        <dbReference type="PDB" id="1HOO"/>
    </source>
</evidence>
<evidence type="ECO:0007829" key="14">
    <source>
        <dbReference type="PDB" id="1HOP"/>
    </source>
</evidence>
<evidence type="ECO:0007829" key="15">
    <source>
        <dbReference type="PDB" id="1QF5"/>
    </source>
</evidence>
<name>PURA_ECOLI</name>
<feature type="initiator methionine" description="Removed" evidence="5 8">
    <location>
        <position position="1"/>
    </location>
</feature>
<feature type="chain" id="PRO_0000095174" description="Adenylosuccinate synthetase">
    <location>
        <begin position="2"/>
        <end position="432"/>
    </location>
</feature>
<feature type="active site" description="Proton acceptor">
    <location>
        <position position="14"/>
    </location>
</feature>
<feature type="active site" description="Proton donor">
    <location>
        <position position="42"/>
    </location>
</feature>
<feature type="binding site" evidence="1 2">
    <location>
        <begin position="13"/>
        <end position="19"/>
    </location>
    <ligand>
        <name>GTP</name>
        <dbReference type="ChEBI" id="CHEBI:37565"/>
    </ligand>
</feature>
<feature type="binding site" description="in other chain">
    <location>
        <begin position="14"/>
        <end position="17"/>
    </location>
    <ligand>
        <name>IMP</name>
        <dbReference type="ChEBI" id="CHEBI:58053"/>
        <note>ligand shared between dimeric partners</note>
    </ligand>
</feature>
<feature type="binding site" evidence="1 2 6 7">
    <location>
        <position position="14"/>
    </location>
    <ligand>
        <name>Mg(2+)</name>
        <dbReference type="ChEBI" id="CHEBI:18420"/>
    </ligand>
</feature>
<feature type="binding site" description="in other chain">
    <location>
        <begin position="39"/>
        <end position="42"/>
    </location>
    <ligand>
        <name>IMP</name>
        <dbReference type="ChEBI" id="CHEBI:58053"/>
        <note>ligand shared between dimeric partners</note>
    </ligand>
</feature>
<feature type="binding site" evidence="1 2">
    <location>
        <begin position="41"/>
        <end position="43"/>
    </location>
    <ligand>
        <name>GTP</name>
        <dbReference type="ChEBI" id="CHEBI:37565"/>
    </ligand>
</feature>
<feature type="binding site" evidence="1 2 6 7">
    <location>
        <position position="41"/>
    </location>
    <ligand>
        <name>Mg(2+)</name>
        <dbReference type="ChEBI" id="CHEBI:18420"/>
    </ligand>
</feature>
<feature type="binding site" description="in other chain" evidence="1 2 7">
    <location>
        <position position="130"/>
    </location>
    <ligand>
        <name>IMP</name>
        <dbReference type="ChEBI" id="CHEBI:58053"/>
        <note>ligand shared between dimeric partners</note>
    </ligand>
</feature>
<feature type="binding site" evidence="1 2 7">
    <location>
        <position position="144"/>
    </location>
    <ligand>
        <name>IMP</name>
        <dbReference type="ChEBI" id="CHEBI:58053"/>
        <note>ligand shared between dimeric partners</note>
    </ligand>
</feature>
<feature type="binding site" description="in other chain" evidence="1 2 7">
    <location>
        <position position="225"/>
    </location>
    <ligand>
        <name>IMP</name>
        <dbReference type="ChEBI" id="CHEBI:58053"/>
        <note>ligand shared between dimeric partners</note>
    </ligand>
</feature>
<feature type="binding site" description="in other chain" evidence="1 2 7">
    <location>
        <position position="240"/>
    </location>
    <ligand>
        <name>IMP</name>
        <dbReference type="ChEBI" id="CHEBI:58053"/>
        <note>ligand shared between dimeric partners</note>
    </ligand>
</feature>
<feature type="binding site">
    <location>
        <begin position="300"/>
        <end position="306"/>
    </location>
    <ligand>
        <name>substrate</name>
    </ligand>
</feature>
<feature type="binding site" description="in other chain" evidence="1 2 7">
    <location>
        <position position="304"/>
    </location>
    <ligand>
        <name>IMP</name>
        <dbReference type="ChEBI" id="CHEBI:58053"/>
        <note>ligand shared between dimeric partners</note>
    </ligand>
</feature>
<feature type="binding site" evidence="1 2">
    <location>
        <position position="306"/>
    </location>
    <ligand>
        <name>GTP</name>
        <dbReference type="ChEBI" id="CHEBI:37565"/>
    </ligand>
</feature>
<feature type="binding site" evidence="1 2">
    <location>
        <begin position="332"/>
        <end position="334"/>
    </location>
    <ligand>
        <name>GTP</name>
        <dbReference type="ChEBI" id="CHEBI:37565"/>
    </ligand>
</feature>
<feature type="binding site" evidence="1 2">
    <location>
        <begin position="415"/>
        <end position="417"/>
    </location>
    <ligand>
        <name>GTP</name>
        <dbReference type="ChEBI" id="CHEBI:37565"/>
    </ligand>
</feature>
<feature type="mutagenesis site" description="Significant reduction in activity." evidence="3">
    <original>G</original>
    <variation>V</variation>
    <location>
        <position position="13"/>
    </location>
</feature>
<feature type="mutagenesis site" description="Significant reduction in activity." evidence="3">
    <original>G</original>
    <variation>V</variation>
    <location>
        <position position="16"/>
    </location>
</feature>
<feature type="mutagenesis site" description="Reduces catalytic efficiency by 50%." evidence="3">
    <original>K</original>
    <variation>Q</variation>
    <location>
        <position position="17"/>
    </location>
</feature>
<feature type="mutagenesis site" description="Significant reduction in activity." evidence="3">
    <original>G</original>
    <variation>V</variation>
    <location>
        <position position="18"/>
    </location>
</feature>
<feature type="mutagenesis site" description="Significant reduction in activity." evidence="3">
    <original>K</original>
    <variation>R</variation>
    <location>
        <position position="19"/>
    </location>
</feature>
<feature type="mutagenesis site" description="Significant reduction in activity." evidence="3">
    <original>I</original>
    <variation>T</variation>
    <location>
        <position position="20"/>
    </location>
</feature>
<feature type="mutagenesis site" description="Total loss of activity." evidence="3">
    <original>K</original>
    <variation>I</variation>
    <location>
        <position position="141"/>
    </location>
</feature>
<feature type="mutagenesis site" description="Does not reduce catalytic efficiency." evidence="3">
    <original>R</original>
    <variation>L</variation>
    <location>
        <position position="144"/>
    </location>
</feature>
<feature type="mutagenesis site" description="Reduced activity." evidence="4">
    <original>R</original>
    <variation>L</variation>
    <location>
        <position position="148"/>
    </location>
</feature>
<feature type="mutagenesis site" description="Reduces catalytic efficiency by 87%." evidence="3">
    <original>R</original>
    <variation>L</variation>
    <location>
        <position position="304"/>
    </location>
</feature>
<feature type="sequence conflict" description="In Ref. 1; AAA24446." evidence="9" ref="1">
    <original>G</original>
    <variation>D</variation>
    <location>
        <position position="417"/>
    </location>
</feature>
<feature type="strand" evidence="10">
    <location>
        <begin position="4"/>
        <end position="13"/>
    </location>
</feature>
<feature type="helix" evidence="10">
    <location>
        <begin position="17"/>
        <end position="24"/>
    </location>
</feature>
<feature type="turn" evidence="10">
    <location>
        <begin position="25"/>
        <end position="27"/>
    </location>
</feature>
<feature type="strand" evidence="10">
    <location>
        <begin position="29"/>
        <end position="33"/>
    </location>
</feature>
<feature type="strand" evidence="10">
    <location>
        <begin position="42"/>
        <end position="46"/>
    </location>
</feature>
<feature type="strand" evidence="10">
    <location>
        <begin position="49"/>
        <end position="56"/>
    </location>
</feature>
<feature type="helix" evidence="10">
    <location>
        <begin position="58"/>
        <end position="61"/>
    </location>
</feature>
<feature type="strand" evidence="13">
    <location>
        <begin position="62"/>
        <end position="64"/>
    </location>
</feature>
<feature type="strand" evidence="10">
    <location>
        <begin position="66"/>
        <end position="69"/>
    </location>
</feature>
<feature type="helix" evidence="10">
    <location>
        <begin position="77"/>
        <end position="89"/>
    </location>
</feature>
<feature type="helix" evidence="10">
    <location>
        <begin position="94"/>
        <end position="97"/>
    </location>
</feature>
<feature type="strand" evidence="10">
    <location>
        <begin position="98"/>
        <end position="100"/>
    </location>
</feature>
<feature type="strand" evidence="12">
    <location>
        <begin position="104"/>
        <end position="106"/>
    </location>
</feature>
<feature type="helix" evidence="10">
    <location>
        <begin position="109"/>
        <end position="120"/>
    </location>
</feature>
<feature type="helix" evidence="10">
    <location>
        <begin position="123"/>
        <end position="125"/>
    </location>
</feature>
<feature type="strand" evidence="14">
    <location>
        <begin position="126"/>
        <end position="128"/>
    </location>
</feature>
<feature type="strand" evidence="15">
    <location>
        <begin position="131"/>
        <end position="133"/>
    </location>
</feature>
<feature type="helix" evidence="10">
    <location>
        <begin position="134"/>
        <end position="142"/>
    </location>
</feature>
<feature type="helix" evidence="10">
    <location>
        <begin position="149"/>
        <end position="153"/>
    </location>
</feature>
<feature type="helix" evidence="10">
    <location>
        <begin position="155"/>
        <end position="175"/>
    </location>
</feature>
<feature type="helix" evidence="10">
    <location>
        <begin position="184"/>
        <end position="199"/>
    </location>
</feature>
<feature type="helix" evidence="10">
    <location>
        <begin position="205"/>
        <end position="215"/>
    </location>
</feature>
<feature type="strand" evidence="10">
    <location>
        <begin position="219"/>
        <end position="222"/>
    </location>
</feature>
<feature type="helix" evidence="10">
    <location>
        <begin position="227"/>
        <end position="229"/>
    </location>
</feature>
<feature type="turn" evidence="10">
    <location>
        <begin position="231"/>
        <end position="233"/>
    </location>
</feature>
<feature type="strand" evidence="11">
    <location>
        <begin position="234"/>
        <end position="238"/>
    </location>
</feature>
<feature type="helix" evidence="10">
    <location>
        <begin position="246"/>
        <end position="248"/>
    </location>
</feature>
<feature type="helix" evidence="10">
    <location>
        <begin position="249"/>
        <end position="253"/>
    </location>
</feature>
<feature type="helix" evidence="10">
    <location>
        <begin position="257"/>
        <end position="259"/>
    </location>
</feature>
<feature type="strand" evidence="10">
    <location>
        <begin position="262"/>
        <end position="273"/>
    </location>
</feature>
<feature type="strand" evidence="10">
    <location>
        <begin position="275"/>
        <end position="277"/>
    </location>
</feature>
<feature type="helix" evidence="10">
    <location>
        <begin position="286"/>
        <end position="295"/>
    </location>
</feature>
<feature type="turn" evidence="10">
    <location>
        <begin position="300"/>
        <end position="302"/>
    </location>
</feature>
<feature type="strand" evidence="10">
    <location>
        <begin position="307"/>
        <end position="309"/>
    </location>
</feature>
<feature type="helix" evidence="10">
    <location>
        <begin position="313"/>
        <end position="323"/>
    </location>
</feature>
<feature type="strand" evidence="10">
    <location>
        <begin position="327"/>
        <end position="331"/>
    </location>
</feature>
<feature type="helix" evidence="10">
    <location>
        <begin position="333"/>
        <end position="336"/>
    </location>
</feature>
<feature type="strand" evidence="10">
    <location>
        <begin position="340"/>
        <end position="349"/>
    </location>
</feature>
<feature type="strand" evidence="10">
    <location>
        <begin position="355"/>
        <end position="358"/>
    </location>
</feature>
<feature type="helix" evidence="15">
    <location>
        <begin position="363"/>
        <end position="365"/>
    </location>
</feature>
<feature type="helix" evidence="10">
    <location>
        <begin position="366"/>
        <end position="368"/>
    </location>
</feature>
<feature type="strand" evidence="10">
    <location>
        <begin position="370"/>
        <end position="377"/>
    </location>
</feature>
<feature type="helix" evidence="10">
    <location>
        <begin position="389"/>
        <end position="391"/>
    </location>
</feature>
<feature type="helix" evidence="10">
    <location>
        <begin position="394"/>
        <end position="407"/>
    </location>
</feature>
<feature type="strand" evidence="10">
    <location>
        <begin position="411"/>
        <end position="415"/>
    </location>
</feature>
<feature type="strand" evidence="10">
    <location>
        <begin position="417"/>
        <end position="419"/>
    </location>
</feature>
<feature type="strand" evidence="10">
    <location>
        <begin position="422"/>
        <end position="427"/>
    </location>
</feature>
<feature type="turn" evidence="10">
    <location>
        <begin position="429"/>
        <end position="431"/>
    </location>
</feature>
<dbReference type="EC" id="6.3.4.4" evidence="1"/>
<dbReference type="EMBL" id="J04199">
    <property type="protein sequence ID" value="AAA24446.1"/>
    <property type="molecule type" value="Genomic_DNA"/>
</dbReference>
<dbReference type="EMBL" id="U14003">
    <property type="protein sequence ID" value="AAA97073.1"/>
    <property type="molecule type" value="Genomic_DNA"/>
</dbReference>
<dbReference type="EMBL" id="U00096">
    <property type="protein sequence ID" value="AAC77134.1"/>
    <property type="molecule type" value="Genomic_DNA"/>
</dbReference>
<dbReference type="EMBL" id="AP009048">
    <property type="protein sequence ID" value="BAE78178.1"/>
    <property type="molecule type" value="Genomic_DNA"/>
</dbReference>
<dbReference type="PIR" id="S56402">
    <property type="entry name" value="AJECDS"/>
</dbReference>
<dbReference type="RefSeq" id="NP_418598.1">
    <property type="nucleotide sequence ID" value="NC_000913.3"/>
</dbReference>
<dbReference type="RefSeq" id="WP_000527955.1">
    <property type="nucleotide sequence ID" value="NZ_STEB01000013.1"/>
</dbReference>
<dbReference type="PDB" id="1ADE">
    <property type="method" value="X-ray"/>
    <property type="resolution" value="2.00 A"/>
    <property type="chains" value="A/B=2-432"/>
</dbReference>
<dbReference type="PDB" id="1ADI">
    <property type="method" value="X-ray"/>
    <property type="resolution" value="2.50 A"/>
    <property type="chains" value="A/B=2-432"/>
</dbReference>
<dbReference type="PDB" id="1CG0">
    <property type="method" value="X-ray"/>
    <property type="resolution" value="2.50 A"/>
    <property type="chains" value="A=2-432"/>
</dbReference>
<dbReference type="PDB" id="1CG1">
    <property type="method" value="X-ray"/>
    <property type="resolution" value="2.50 A"/>
    <property type="chains" value="A=2-432"/>
</dbReference>
<dbReference type="PDB" id="1CG3">
    <property type="method" value="X-ray"/>
    <property type="resolution" value="2.50 A"/>
    <property type="chains" value="A=2-432"/>
</dbReference>
<dbReference type="PDB" id="1CG4">
    <property type="method" value="X-ray"/>
    <property type="resolution" value="2.50 A"/>
    <property type="chains" value="A=2-432"/>
</dbReference>
<dbReference type="PDB" id="1CH8">
    <property type="method" value="X-ray"/>
    <property type="resolution" value="2.50 A"/>
    <property type="chains" value="A=2-432"/>
</dbReference>
<dbReference type="PDB" id="1CIB">
    <property type="method" value="X-ray"/>
    <property type="resolution" value="2.30 A"/>
    <property type="chains" value="A=2-432"/>
</dbReference>
<dbReference type="PDB" id="1GIM">
    <property type="method" value="X-ray"/>
    <property type="resolution" value="2.50 A"/>
    <property type="chains" value="A=2-432"/>
</dbReference>
<dbReference type="PDB" id="1GIN">
    <property type="method" value="X-ray"/>
    <property type="resolution" value="2.80 A"/>
    <property type="chains" value="A=2-432"/>
</dbReference>
<dbReference type="PDB" id="1HON">
    <property type="method" value="X-ray"/>
    <property type="resolution" value="2.30 A"/>
    <property type="chains" value="A/B=2-432"/>
</dbReference>
<dbReference type="PDB" id="1HOO">
    <property type="method" value="X-ray"/>
    <property type="resolution" value="2.30 A"/>
    <property type="chains" value="A/B=2-432"/>
</dbReference>
<dbReference type="PDB" id="1HOP">
    <property type="method" value="X-ray"/>
    <property type="resolution" value="2.30 A"/>
    <property type="chains" value="A/B=2-432"/>
</dbReference>
<dbReference type="PDB" id="1JUY">
    <property type="method" value="X-ray"/>
    <property type="resolution" value="2.50 A"/>
    <property type="chains" value="A=2-432"/>
</dbReference>
<dbReference type="PDB" id="1KJX">
    <property type="method" value="X-ray"/>
    <property type="resolution" value="2.60 A"/>
    <property type="chains" value="A=1-432"/>
</dbReference>
<dbReference type="PDB" id="1KKB">
    <property type="method" value="X-ray"/>
    <property type="resolution" value="2.60 A"/>
    <property type="chains" value="A=1-432"/>
</dbReference>
<dbReference type="PDB" id="1KKF">
    <property type="method" value="X-ray"/>
    <property type="resolution" value="2.60 A"/>
    <property type="chains" value="A=1-432"/>
</dbReference>
<dbReference type="PDB" id="1KSZ">
    <property type="method" value="X-ray"/>
    <property type="resolution" value="2.80 A"/>
    <property type="chains" value="A=2-432"/>
</dbReference>
<dbReference type="PDB" id="1NHT">
    <property type="method" value="X-ray"/>
    <property type="resolution" value="2.50 A"/>
    <property type="chains" value="A=2-432"/>
</dbReference>
<dbReference type="PDB" id="1QF4">
    <property type="method" value="X-ray"/>
    <property type="resolution" value="2.20 A"/>
    <property type="chains" value="A=2-432"/>
</dbReference>
<dbReference type="PDB" id="1QF5">
    <property type="method" value="X-ray"/>
    <property type="resolution" value="2.00 A"/>
    <property type="chains" value="A=2-432"/>
</dbReference>
<dbReference type="PDB" id="1SON">
    <property type="method" value="X-ray"/>
    <property type="resolution" value="2.55 A"/>
    <property type="chains" value="A=2-432"/>
</dbReference>
<dbReference type="PDB" id="1SOO">
    <property type="method" value="X-ray"/>
    <property type="resolution" value="2.60 A"/>
    <property type="chains" value="A=2-432"/>
</dbReference>
<dbReference type="PDB" id="2GCQ">
    <property type="method" value="X-ray"/>
    <property type="resolution" value="2.00 A"/>
    <property type="chains" value="A=2-432"/>
</dbReference>
<dbReference type="PDBsum" id="1ADE"/>
<dbReference type="PDBsum" id="1ADI"/>
<dbReference type="PDBsum" id="1CG0"/>
<dbReference type="PDBsum" id="1CG1"/>
<dbReference type="PDBsum" id="1CG3"/>
<dbReference type="PDBsum" id="1CG4"/>
<dbReference type="PDBsum" id="1CH8"/>
<dbReference type="PDBsum" id="1CIB"/>
<dbReference type="PDBsum" id="1GIM"/>
<dbReference type="PDBsum" id="1GIN"/>
<dbReference type="PDBsum" id="1HON"/>
<dbReference type="PDBsum" id="1HOO"/>
<dbReference type="PDBsum" id="1HOP"/>
<dbReference type="PDBsum" id="1JUY"/>
<dbReference type="PDBsum" id="1KJX"/>
<dbReference type="PDBsum" id="1KKB"/>
<dbReference type="PDBsum" id="1KKF"/>
<dbReference type="PDBsum" id="1KSZ"/>
<dbReference type="PDBsum" id="1NHT"/>
<dbReference type="PDBsum" id="1QF4"/>
<dbReference type="PDBsum" id="1QF5"/>
<dbReference type="PDBsum" id="1SON"/>
<dbReference type="PDBsum" id="1SOO"/>
<dbReference type="PDBsum" id="2GCQ"/>
<dbReference type="SMR" id="P0A7D4"/>
<dbReference type="BioGRID" id="4262696">
    <property type="interactions" value="53"/>
</dbReference>
<dbReference type="BioGRID" id="852987">
    <property type="interactions" value="7"/>
</dbReference>
<dbReference type="DIP" id="DIP-36219N"/>
<dbReference type="FunCoup" id="P0A7D4">
    <property type="interactions" value="941"/>
</dbReference>
<dbReference type="IntAct" id="P0A7D4">
    <property type="interactions" value="3"/>
</dbReference>
<dbReference type="STRING" id="511145.b4177"/>
<dbReference type="DrugBank" id="DB02666">
    <property type="generic name" value="(C8-R)-hydantocidin 5'-phosphate"/>
</dbReference>
<dbReference type="DrugBank" id="DB04460">
    <property type="generic name" value="(C8-S)-Hydantocidin 5'-phosphate"/>
</dbReference>
<dbReference type="DrugBank" id="DB02954">
    <property type="generic name" value="(Carboxyhydroxyamino)Ethanoic Acid"/>
</dbReference>
<dbReference type="DrugBank" id="DB03146">
    <property type="generic name" value="2-deazo-6-thiophosphate guanosine-5'-monophosphate"/>
</dbReference>
<dbReference type="DrugBank" id="DB02836">
    <property type="generic name" value="Guanosine 5'-diphosphate 2':3'-cyclic monophosphate"/>
</dbReference>
<dbReference type="DrugBank" id="DB04315">
    <property type="generic name" value="Guanosine-5'-Diphosphate"/>
</dbReference>
<dbReference type="DrugBank" id="DB02109">
    <property type="generic name" value="Hadacidin"/>
</dbReference>
<dbReference type="DrugBank" id="DB02493">
    <property type="generic name" value="Hydantocidin-5'-phosphate"/>
</dbReference>
<dbReference type="DrugBank" id="DB04566">
    <property type="generic name" value="Inosinic Acid"/>
</dbReference>
<dbReference type="CarbonylDB" id="P0A7D4"/>
<dbReference type="jPOST" id="P0A7D4"/>
<dbReference type="PaxDb" id="511145-b4177"/>
<dbReference type="EnsemblBacteria" id="AAC77134">
    <property type="protein sequence ID" value="AAC77134"/>
    <property type="gene ID" value="b4177"/>
</dbReference>
<dbReference type="GeneID" id="75202411"/>
<dbReference type="GeneID" id="948695"/>
<dbReference type="KEGG" id="ecj:JW4135"/>
<dbReference type="KEGG" id="eco:b4177"/>
<dbReference type="KEGG" id="ecoc:C3026_22570"/>
<dbReference type="PATRIC" id="fig|1411691.4.peg.2524"/>
<dbReference type="EchoBASE" id="EB0783"/>
<dbReference type="eggNOG" id="COG0104">
    <property type="taxonomic scope" value="Bacteria"/>
</dbReference>
<dbReference type="HOGENOM" id="CLU_029848_0_0_6"/>
<dbReference type="InParanoid" id="P0A7D4"/>
<dbReference type="OMA" id="FHHAKPI"/>
<dbReference type="OrthoDB" id="9807553at2"/>
<dbReference type="PhylomeDB" id="P0A7D4"/>
<dbReference type="BioCyc" id="EcoCyc:ADENYLOSUCCINATE-SYN-MONOMER"/>
<dbReference type="BioCyc" id="MetaCyc:ADENYLOSUCCINATE-SYN-MONOMER"/>
<dbReference type="BRENDA" id="6.3.4.4">
    <property type="organism ID" value="2026"/>
</dbReference>
<dbReference type="SABIO-RK" id="P0A7D4"/>
<dbReference type="UniPathway" id="UPA00075">
    <property type="reaction ID" value="UER00335"/>
</dbReference>
<dbReference type="EvolutionaryTrace" id="P0A7D4"/>
<dbReference type="PRO" id="PR:P0A7D4"/>
<dbReference type="Proteomes" id="UP000000625">
    <property type="component" value="Chromosome"/>
</dbReference>
<dbReference type="GO" id="GO:0005737">
    <property type="term" value="C:cytoplasm"/>
    <property type="evidence" value="ECO:0000318"/>
    <property type="project" value="GO_Central"/>
</dbReference>
<dbReference type="GO" id="GO:0005829">
    <property type="term" value="C:cytosol"/>
    <property type="evidence" value="ECO:0000314"/>
    <property type="project" value="EcoCyc"/>
</dbReference>
<dbReference type="GO" id="GO:0016020">
    <property type="term" value="C:membrane"/>
    <property type="evidence" value="ECO:0007005"/>
    <property type="project" value="UniProtKB"/>
</dbReference>
<dbReference type="GO" id="GO:0004019">
    <property type="term" value="F:adenylosuccinate synthase activity"/>
    <property type="evidence" value="ECO:0000314"/>
    <property type="project" value="EcoCyc"/>
</dbReference>
<dbReference type="GO" id="GO:0005525">
    <property type="term" value="F:GTP binding"/>
    <property type="evidence" value="ECO:0007669"/>
    <property type="project" value="UniProtKB-UniRule"/>
</dbReference>
<dbReference type="GO" id="GO:0097216">
    <property type="term" value="F:guanosine tetraphosphate binding"/>
    <property type="evidence" value="ECO:0000314"/>
    <property type="project" value="EcoCyc"/>
</dbReference>
<dbReference type="GO" id="GO:0000287">
    <property type="term" value="F:magnesium ion binding"/>
    <property type="evidence" value="ECO:0007669"/>
    <property type="project" value="UniProtKB-UniRule"/>
</dbReference>
<dbReference type="GO" id="GO:0044208">
    <property type="term" value="P:'de novo' AMP biosynthetic process"/>
    <property type="evidence" value="ECO:0000318"/>
    <property type="project" value="GO_Central"/>
</dbReference>
<dbReference type="GO" id="GO:0046086">
    <property type="term" value="P:adenosine biosynthetic process"/>
    <property type="evidence" value="ECO:0000315"/>
    <property type="project" value="EcoliWiki"/>
</dbReference>
<dbReference type="GO" id="GO:0006974">
    <property type="term" value="P:DNA damage response"/>
    <property type="evidence" value="ECO:0000270"/>
    <property type="project" value="EcoliWiki"/>
</dbReference>
<dbReference type="GO" id="GO:0046040">
    <property type="term" value="P:IMP metabolic process"/>
    <property type="evidence" value="ECO:0000318"/>
    <property type="project" value="GO_Central"/>
</dbReference>
<dbReference type="GO" id="GO:0015949">
    <property type="term" value="P:nucleobase-containing small molecule interconversion"/>
    <property type="evidence" value="ECO:0000314"/>
    <property type="project" value="EcoliWiki"/>
</dbReference>
<dbReference type="GO" id="GO:0006164">
    <property type="term" value="P:purine nucleotide biosynthetic process"/>
    <property type="evidence" value="ECO:0000315"/>
    <property type="project" value="EcoCyc"/>
</dbReference>
<dbReference type="CDD" id="cd03108">
    <property type="entry name" value="AdSS"/>
    <property type="match status" value="1"/>
</dbReference>
<dbReference type="FunFam" id="1.10.300.10:FF:000001">
    <property type="entry name" value="Adenylosuccinate synthetase"/>
    <property type="match status" value="1"/>
</dbReference>
<dbReference type="FunFam" id="3.90.170.10:FF:000001">
    <property type="entry name" value="Adenylosuccinate synthetase"/>
    <property type="match status" value="1"/>
</dbReference>
<dbReference type="Gene3D" id="3.40.440.10">
    <property type="entry name" value="Adenylosuccinate Synthetase, subunit A, domain 1"/>
    <property type="match status" value="1"/>
</dbReference>
<dbReference type="Gene3D" id="1.10.300.10">
    <property type="entry name" value="Adenylosuccinate Synthetase, subunit A, domain 2"/>
    <property type="match status" value="1"/>
</dbReference>
<dbReference type="Gene3D" id="3.90.170.10">
    <property type="entry name" value="Adenylosuccinate Synthetase, subunit A, domain 3"/>
    <property type="match status" value="1"/>
</dbReference>
<dbReference type="HAMAP" id="MF_00011">
    <property type="entry name" value="Adenylosucc_synth"/>
    <property type="match status" value="1"/>
</dbReference>
<dbReference type="InterPro" id="IPR018220">
    <property type="entry name" value="Adenylosuccin_syn_GTP-bd"/>
</dbReference>
<dbReference type="InterPro" id="IPR033128">
    <property type="entry name" value="Adenylosuccin_syn_Lys_AS"/>
</dbReference>
<dbReference type="InterPro" id="IPR042109">
    <property type="entry name" value="Adenylosuccinate_synth_dom1"/>
</dbReference>
<dbReference type="InterPro" id="IPR042110">
    <property type="entry name" value="Adenylosuccinate_synth_dom2"/>
</dbReference>
<dbReference type="InterPro" id="IPR042111">
    <property type="entry name" value="Adenylosuccinate_synth_dom3"/>
</dbReference>
<dbReference type="InterPro" id="IPR001114">
    <property type="entry name" value="Adenylosuccinate_synthetase"/>
</dbReference>
<dbReference type="InterPro" id="IPR027417">
    <property type="entry name" value="P-loop_NTPase"/>
</dbReference>
<dbReference type="NCBIfam" id="NF002223">
    <property type="entry name" value="PRK01117.1"/>
    <property type="match status" value="1"/>
</dbReference>
<dbReference type="NCBIfam" id="TIGR00184">
    <property type="entry name" value="purA"/>
    <property type="match status" value="1"/>
</dbReference>
<dbReference type="PANTHER" id="PTHR11846">
    <property type="entry name" value="ADENYLOSUCCINATE SYNTHETASE"/>
    <property type="match status" value="1"/>
</dbReference>
<dbReference type="PANTHER" id="PTHR11846:SF0">
    <property type="entry name" value="ADENYLOSUCCINATE SYNTHETASE"/>
    <property type="match status" value="1"/>
</dbReference>
<dbReference type="Pfam" id="PF00709">
    <property type="entry name" value="Adenylsucc_synt"/>
    <property type="match status" value="1"/>
</dbReference>
<dbReference type="SMART" id="SM00788">
    <property type="entry name" value="Adenylsucc_synt"/>
    <property type="match status" value="1"/>
</dbReference>
<dbReference type="SUPFAM" id="SSF52540">
    <property type="entry name" value="P-loop containing nucleoside triphosphate hydrolases"/>
    <property type="match status" value="1"/>
</dbReference>
<dbReference type="PROSITE" id="PS01266">
    <property type="entry name" value="ADENYLOSUCCIN_SYN_1"/>
    <property type="match status" value="1"/>
</dbReference>
<dbReference type="PROSITE" id="PS00513">
    <property type="entry name" value="ADENYLOSUCCIN_SYN_2"/>
    <property type="match status" value="1"/>
</dbReference>
<proteinExistence type="evidence at protein level"/>
<organism>
    <name type="scientific">Escherichia coli (strain K12)</name>
    <dbReference type="NCBI Taxonomy" id="83333"/>
    <lineage>
        <taxon>Bacteria</taxon>
        <taxon>Pseudomonadati</taxon>
        <taxon>Pseudomonadota</taxon>
        <taxon>Gammaproteobacteria</taxon>
        <taxon>Enterobacterales</taxon>
        <taxon>Enterobacteriaceae</taxon>
        <taxon>Escherichia</taxon>
    </lineage>
</organism>
<gene>
    <name evidence="1" type="primary">purA</name>
    <name type="synonym">adeK</name>
    <name type="ordered locus">b4177</name>
    <name type="ordered locus">JW4135</name>
</gene>